<protein>
    <recommendedName>
        <fullName evidence="1">Ribonuclease P protein component</fullName>
        <shortName evidence="1">RNase P protein</shortName>
        <shortName evidence="1">RNaseP protein</shortName>
        <ecNumber evidence="1">3.1.26.5</ecNumber>
    </recommendedName>
    <alternativeName>
        <fullName evidence="1">Protein C5</fullName>
    </alternativeName>
</protein>
<comment type="function">
    <text evidence="1">RNaseP catalyzes the removal of the 5'-leader sequence from pre-tRNA to produce the mature 5'-terminus. It can also cleave other RNA substrates such as 4.5S RNA. The protein component plays an auxiliary but essential role in vivo by binding to the 5'-leader sequence and broadening the substrate specificity of the ribozyme.</text>
</comment>
<comment type="catalytic activity">
    <reaction evidence="1">
        <text>Endonucleolytic cleavage of RNA, removing 5'-extranucleotides from tRNA precursor.</text>
        <dbReference type="EC" id="3.1.26.5"/>
    </reaction>
</comment>
<comment type="subunit">
    <text evidence="1">Consists of a catalytic RNA component (M1 or rnpB) and a protein subunit.</text>
</comment>
<comment type="similarity">
    <text evidence="1">Belongs to the RnpA family.</text>
</comment>
<reference key="1">
    <citation type="journal article" date="2014" name="Stand. Genomic Sci.">
        <title>Complete genome sequence of Anabaena variabilis ATCC 29413.</title>
        <authorList>
            <person name="Thiel T."/>
            <person name="Pratte B.S."/>
            <person name="Zhong J."/>
            <person name="Goodwin L."/>
            <person name="Copeland A."/>
            <person name="Lucas S."/>
            <person name="Han C."/>
            <person name="Pitluck S."/>
            <person name="Land M.L."/>
            <person name="Kyrpides N.C."/>
            <person name="Woyke T."/>
        </authorList>
    </citation>
    <scope>NUCLEOTIDE SEQUENCE [LARGE SCALE GENOMIC DNA]</scope>
    <source>
        <strain>ATCC 29413 / PCC 7937</strain>
    </source>
</reference>
<name>RNPA_TRIV2</name>
<dbReference type="EC" id="3.1.26.5" evidence="1"/>
<dbReference type="EMBL" id="CP000117">
    <property type="protein sequence ID" value="ABA23040.1"/>
    <property type="molecule type" value="Genomic_DNA"/>
</dbReference>
<dbReference type="SMR" id="Q3M7J6"/>
<dbReference type="STRING" id="240292.Ava_3433"/>
<dbReference type="KEGG" id="ava:Ava_3433"/>
<dbReference type="eggNOG" id="COG0594">
    <property type="taxonomic scope" value="Bacteria"/>
</dbReference>
<dbReference type="HOGENOM" id="CLU_117179_9_0_3"/>
<dbReference type="Proteomes" id="UP000002533">
    <property type="component" value="Chromosome"/>
</dbReference>
<dbReference type="GO" id="GO:0030677">
    <property type="term" value="C:ribonuclease P complex"/>
    <property type="evidence" value="ECO:0007669"/>
    <property type="project" value="TreeGrafter"/>
</dbReference>
<dbReference type="GO" id="GO:0042781">
    <property type="term" value="F:3'-tRNA processing endoribonuclease activity"/>
    <property type="evidence" value="ECO:0007669"/>
    <property type="project" value="TreeGrafter"/>
</dbReference>
<dbReference type="GO" id="GO:0004526">
    <property type="term" value="F:ribonuclease P activity"/>
    <property type="evidence" value="ECO:0007669"/>
    <property type="project" value="UniProtKB-UniRule"/>
</dbReference>
<dbReference type="GO" id="GO:0000049">
    <property type="term" value="F:tRNA binding"/>
    <property type="evidence" value="ECO:0007669"/>
    <property type="project" value="UniProtKB-UniRule"/>
</dbReference>
<dbReference type="GO" id="GO:0001682">
    <property type="term" value="P:tRNA 5'-leader removal"/>
    <property type="evidence" value="ECO:0007669"/>
    <property type="project" value="UniProtKB-UniRule"/>
</dbReference>
<dbReference type="Gene3D" id="3.30.230.10">
    <property type="match status" value="1"/>
</dbReference>
<dbReference type="HAMAP" id="MF_00227">
    <property type="entry name" value="RNase_P"/>
    <property type="match status" value="1"/>
</dbReference>
<dbReference type="InterPro" id="IPR020568">
    <property type="entry name" value="Ribosomal_Su5_D2-typ_SF"/>
</dbReference>
<dbReference type="InterPro" id="IPR014721">
    <property type="entry name" value="Ribsml_uS5_D2-typ_fold_subgr"/>
</dbReference>
<dbReference type="InterPro" id="IPR000100">
    <property type="entry name" value="RNase_P"/>
</dbReference>
<dbReference type="NCBIfam" id="TIGR00188">
    <property type="entry name" value="rnpA"/>
    <property type="match status" value="1"/>
</dbReference>
<dbReference type="PANTHER" id="PTHR33992">
    <property type="entry name" value="RIBONUCLEASE P PROTEIN COMPONENT"/>
    <property type="match status" value="1"/>
</dbReference>
<dbReference type="PANTHER" id="PTHR33992:SF1">
    <property type="entry name" value="RIBONUCLEASE P PROTEIN COMPONENT"/>
    <property type="match status" value="1"/>
</dbReference>
<dbReference type="Pfam" id="PF00825">
    <property type="entry name" value="Ribonuclease_P"/>
    <property type="match status" value="1"/>
</dbReference>
<dbReference type="SUPFAM" id="SSF54211">
    <property type="entry name" value="Ribosomal protein S5 domain 2-like"/>
    <property type="match status" value="1"/>
</dbReference>
<evidence type="ECO:0000255" key="1">
    <source>
        <dbReference type="HAMAP-Rule" id="MF_00227"/>
    </source>
</evidence>
<evidence type="ECO:0000256" key="2">
    <source>
        <dbReference type="SAM" id="MobiDB-lite"/>
    </source>
</evidence>
<feature type="chain" id="PRO_1000021372" description="Ribonuclease P protein component">
    <location>
        <begin position="1"/>
        <end position="140"/>
    </location>
</feature>
<feature type="region of interest" description="Disordered" evidence="2">
    <location>
        <begin position="33"/>
        <end position="54"/>
    </location>
</feature>
<proteinExistence type="inferred from homology"/>
<organism>
    <name type="scientific">Trichormus variabilis (strain ATCC 29413 / PCC 7937)</name>
    <name type="common">Anabaena variabilis</name>
    <dbReference type="NCBI Taxonomy" id="240292"/>
    <lineage>
        <taxon>Bacteria</taxon>
        <taxon>Bacillati</taxon>
        <taxon>Cyanobacteriota</taxon>
        <taxon>Cyanophyceae</taxon>
        <taxon>Nostocales</taxon>
        <taxon>Nostocaceae</taxon>
        <taxon>Trichormus</taxon>
    </lineage>
</organism>
<keyword id="KW-0255">Endonuclease</keyword>
<keyword id="KW-0378">Hydrolase</keyword>
<keyword id="KW-0540">Nuclease</keyword>
<keyword id="KW-0694">RNA-binding</keyword>
<keyword id="KW-0819">tRNA processing</keyword>
<accession>Q3M7J6</accession>
<sequence>MALPKANRLKSRHDFQAVFREGLRRNSSHFTLRALKPSSAKKSSLDTAAKTQPADDVQDIPSTLIGVSISTKVSKRAVVRNRIKRQITAAMQQLLPRLAPGWKLVVIVKPTAAESKCGSQQFLQELEQLLAQTEVLHGHS</sequence>
<gene>
    <name evidence="1" type="primary">rnpA</name>
    <name type="ordered locus">Ava_3433</name>
</gene>